<evidence type="ECO:0000255" key="1">
    <source>
        <dbReference type="HAMAP-Rule" id="MF_00394"/>
    </source>
</evidence>
<name>GPDA_STRMU</name>
<reference key="1">
    <citation type="submission" date="2001-07" db="EMBL/GenBank/DDBJ databases">
        <title>Novel sucrose-dependent adhesion cofactors (sdc) in Streptococcus mutans.</title>
        <authorList>
            <person name="Tao L."/>
            <person name="Tanzer J.M."/>
        </authorList>
    </citation>
    <scope>NUCLEOTIDE SEQUENCE [GENOMIC DNA]</scope>
    <source>
        <strain>LT11</strain>
    </source>
</reference>
<reference key="2">
    <citation type="journal article" date="2002" name="Proc. Natl. Acad. Sci. U.S.A.">
        <title>Genome sequence of Streptococcus mutans UA159, a cariogenic dental pathogen.</title>
        <authorList>
            <person name="Ajdic D.J."/>
            <person name="McShan W.M."/>
            <person name="McLaughlin R.E."/>
            <person name="Savic G."/>
            <person name="Chang J."/>
            <person name="Carson M.B."/>
            <person name="Primeaux C."/>
            <person name="Tian R."/>
            <person name="Kenton S."/>
            <person name="Jia H.G."/>
            <person name="Lin S.P."/>
            <person name="Qian Y."/>
            <person name="Li S."/>
            <person name="Zhu H."/>
            <person name="Najar F.Z."/>
            <person name="Lai H."/>
            <person name="White J."/>
            <person name="Roe B.A."/>
            <person name="Ferretti J.J."/>
        </authorList>
    </citation>
    <scope>NUCLEOTIDE SEQUENCE [LARGE SCALE GENOMIC DNA]</scope>
    <source>
        <strain>ATCC 700610 / UA159</strain>
    </source>
</reference>
<organism>
    <name type="scientific">Streptococcus mutans serotype c (strain ATCC 700610 / UA159)</name>
    <dbReference type="NCBI Taxonomy" id="210007"/>
    <lineage>
        <taxon>Bacteria</taxon>
        <taxon>Bacillati</taxon>
        <taxon>Bacillota</taxon>
        <taxon>Bacilli</taxon>
        <taxon>Lactobacillales</taxon>
        <taxon>Streptococcaceae</taxon>
        <taxon>Streptococcus</taxon>
    </lineage>
</organism>
<gene>
    <name evidence="1" type="primary">gpsA</name>
    <name type="synonym">gpdA</name>
    <name type="ordered locus">SMU_323</name>
</gene>
<proteinExistence type="inferred from homology"/>
<sequence>MIRQKIAVLGPGSWGTALSQVLNDNGHEVRIWGNIPEQLDEINEHHTNKRYFKDVVLDEKIKAYHDLEDALKDIDAVLFVVPTKVTRLVAKQVSQILDHKAVVMHASKGLEPGTHERLSVILEEEIPNHLRSDIVVVSGPSHAEETIVRDITLITAASKDLEAAKYVQKLFSNNYFRLYTNPDVIGVETAGALKNIIAVGAGALHGMGYGDNAKAAVITRGLAEITRLGVKLGADPLTYSGLSGVGDLIVTGTSIYSRNWRAGDALGRGEKLEDIERNMGMVIEGISTTKVAYELSRELNVYMPITCAIYQSIYEGKNIKEAITSMMSNEFRAENEWSK</sequence>
<keyword id="KW-0963">Cytoplasm</keyword>
<keyword id="KW-0444">Lipid biosynthesis</keyword>
<keyword id="KW-0443">Lipid metabolism</keyword>
<keyword id="KW-0520">NAD</keyword>
<keyword id="KW-0521">NADP</keyword>
<keyword id="KW-0547">Nucleotide-binding</keyword>
<keyword id="KW-0560">Oxidoreductase</keyword>
<keyword id="KW-0594">Phospholipid biosynthesis</keyword>
<keyword id="KW-1208">Phospholipid metabolism</keyword>
<keyword id="KW-1185">Reference proteome</keyword>
<feature type="chain" id="PRO_0000138037" description="Glycerol-3-phosphate dehydrogenase [NAD(P)+]">
    <location>
        <begin position="1"/>
        <end position="339"/>
    </location>
</feature>
<feature type="active site" description="Proton acceptor" evidence="1">
    <location>
        <position position="194"/>
    </location>
</feature>
<feature type="binding site" evidence="1">
    <location>
        <position position="13"/>
    </location>
    <ligand>
        <name>NADPH</name>
        <dbReference type="ChEBI" id="CHEBI:57783"/>
    </ligand>
</feature>
<feature type="binding site" evidence="1">
    <location>
        <position position="14"/>
    </location>
    <ligand>
        <name>NADPH</name>
        <dbReference type="ChEBI" id="CHEBI:57783"/>
    </ligand>
</feature>
<feature type="binding site" evidence="1">
    <location>
        <position position="108"/>
    </location>
    <ligand>
        <name>NADPH</name>
        <dbReference type="ChEBI" id="CHEBI:57783"/>
    </ligand>
</feature>
<feature type="binding site" evidence="1">
    <location>
        <position position="108"/>
    </location>
    <ligand>
        <name>sn-glycerol 3-phosphate</name>
        <dbReference type="ChEBI" id="CHEBI:57597"/>
    </ligand>
</feature>
<feature type="binding site" evidence="1">
    <location>
        <position position="139"/>
    </location>
    <ligand>
        <name>sn-glycerol 3-phosphate</name>
        <dbReference type="ChEBI" id="CHEBI:57597"/>
    </ligand>
</feature>
<feature type="binding site" evidence="1">
    <location>
        <position position="141"/>
    </location>
    <ligand>
        <name>sn-glycerol 3-phosphate</name>
        <dbReference type="ChEBI" id="CHEBI:57597"/>
    </ligand>
</feature>
<feature type="binding site" evidence="1">
    <location>
        <position position="143"/>
    </location>
    <ligand>
        <name>NADPH</name>
        <dbReference type="ChEBI" id="CHEBI:57783"/>
    </ligand>
</feature>
<feature type="binding site" evidence="1">
    <location>
        <position position="194"/>
    </location>
    <ligand>
        <name>sn-glycerol 3-phosphate</name>
        <dbReference type="ChEBI" id="CHEBI:57597"/>
    </ligand>
</feature>
<feature type="binding site" evidence="1">
    <location>
        <position position="247"/>
    </location>
    <ligand>
        <name>sn-glycerol 3-phosphate</name>
        <dbReference type="ChEBI" id="CHEBI:57597"/>
    </ligand>
</feature>
<feature type="binding site" evidence="1">
    <location>
        <position position="257"/>
    </location>
    <ligand>
        <name>sn-glycerol 3-phosphate</name>
        <dbReference type="ChEBI" id="CHEBI:57597"/>
    </ligand>
</feature>
<feature type="binding site" evidence="1">
    <location>
        <position position="258"/>
    </location>
    <ligand>
        <name>NADPH</name>
        <dbReference type="ChEBI" id="CHEBI:57783"/>
    </ligand>
</feature>
<feature type="binding site" evidence="1">
    <location>
        <position position="258"/>
    </location>
    <ligand>
        <name>sn-glycerol 3-phosphate</name>
        <dbReference type="ChEBI" id="CHEBI:57597"/>
    </ligand>
</feature>
<feature type="binding site" evidence="1">
    <location>
        <position position="259"/>
    </location>
    <ligand>
        <name>sn-glycerol 3-phosphate</name>
        <dbReference type="ChEBI" id="CHEBI:57597"/>
    </ligand>
</feature>
<feature type="binding site" evidence="1">
    <location>
        <position position="282"/>
    </location>
    <ligand>
        <name>NADPH</name>
        <dbReference type="ChEBI" id="CHEBI:57783"/>
    </ligand>
</feature>
<feature type="binding site" evidence="1">
    <location>
        <position position="284"/>
    </location>
    <ligand>
        <name>NADPH</name>
        <dbReference type="ChEBI" id="CHEBI:57783"/>
    </ligand>
</feature>
<accession>Q93D83</accession>
<protein>
    <recommendedName>
        <fullName evidence="1">Glycerol-3-phosphate dehydrogenase [NAD(P)+]</fullName>
        <ecNumber evidence="1">1.1.1.94</ecNumber>
    </recommendedName>
    <alternativeName>
        <fullName evidence="1">NAD(P)(+)-dependent glycerol-3-phosphate dehydrogenase</fullName>
    </alternativeName>
    <alternativeName>
        <fullName evidence="1">NAD(P)H-dependent dihydroxyacetone-phosphate reductase</fullName>
    </alternativeName>
</protein>
<comment type="function">
    <text evidence="1">Catalyzes the reduction of the glycolytic intermediate dihydroxyacetone phosphate (DHAP) to sn-glycerol 3-phosphate (G3P), the key precursor for phospholipid synthesis.</text>
</comment>
<comment type="catalytic activity">
    <reaction evidence="1">
        <text>sn-glycerol 3-phosphate + NAD(+) = dihydroxyacetone phosphate + NADH + H(+)</text>
        <dbReference type="Rhea" id="RHEA:11092"/>
        <dbReference type="ChEBI" id="CHEBI:15378"/>
        <dbReference type="ChEBI" id="CHEBI:57540"/>
        <dbReference type="ChEBI" id="CHEBI:57597"/>
        <dbReference type="ChEBI" id="CHEBI:57642"/>
        <dbReference type="ChEBI" id="CHEBI:57945"/>
        <dbReference type="EC" id="1.1.1.94"/>
    </reaction>
    <physiologicalReaction direction="right-to-left" evidence="1">
        <dbReference type="Rhea" id="RHEA:11094"/>
    </physiologicalReaction>
</comment>
<comment type="catalytic activity">
    <reaction evidence="1">
        <text>sn-glycerol 3-phosphate + NADP(+) = dihydroxyacetone phosphate + NADPH + H(+)</text>
        <dbReference type="Rhea" id="RHEA:11096"/>
        <dbReference type="ChEBI" id="CHEBI:15378"/>
        <dbReference type="ChEBI" id="CHEBI:57597"/>
        <dbReference type="ChEBI" id="CHEBI:57642"/>
        <dbReference type="ChEBI" id="CHEBI:57783"/>
        <dbReference type="ChEBI" id="CHEBI:58349"/>
        <dbReference type="EC" id="1.1.1.94"/>
    </reaction>
    <physiologicalReaction direction="right-to-left" evidence="1">
        <dbReference type="Rhea" id="RHEA:11098"/>
    </physiologicalReaction>
</comment>
<comment type="pathway">
    <text evidence="1">Membrane lipid metabolism; glycerophospholipid metabolism.</text>
</comment>
<comment type="subcellular location">
    <subcellularLocation>
        <location evidence="1">Cytoplasm</location>
    </subcellularLocation>
</comment>
<comment type="similarity">
    <text evidence="1">Belongs to the NAD-dependent glycerol-3-phosphate dehydrogenase family.</text>
</comment>
<dbReference type="EC" id="1.1.1.94" evidence="1"/>
<dbReference type="EMBL" id="AF397168">
    <property type="protein sequence ID" value="AAL04098.1"/>
    <property type="molecule type" value="Genomic_DNA"/>
</dbReference>
<dbReference type="EMBL" id="AE014133">
    <property type="protein sequence ID" value="AAN58083.1"/>
    <property type="molecule type" value="Genomic_DNA"/>
</dbReference>
<dbReference type="RefSeq" id="NP_720777.1">
    <property type="nucleotide sequence ID" value="NC_004350.2"/>
</dbReference>
<dbReference type="RefSeq" id="WP_002262523.1">
    <property type="nucleotide sequence ID" value="NC_004350.2"/>
</dbReference>
<dbReference type="SMR" id="Q93D83"/>
<dbReference type="STRING" id="210007.SMU_323"/>
<dbReference type="KEGG" id="smu:SMU_323"/>
<dbReference type="PATRIC" id="fig|210007.7.peg.279"/>
<dbReference type="eggNOG" id="COG0240">
    <property type="taxonomic scope" value="Bacteria"/>
</dbReference>
<dbReference type="HOGENOM" id="CLU_033449_0_2_9"/>
<dbReference type="OrthoDB" id="9812273at2"/>
<dbReference type="PhylomeDB" id="Q93D83"/>
<dbReference type="UniPathway" id="UPA00940"/>
<dbReference type="Proteomes" id="UP000002512">
    <property type="component" value="Chromosome"/>
</dbReference>
<dbReference type="GO" id="GO:0005829">
    <property type="term" value="C:cytosol"/>
    <property type="evidence" value="ECO:0007669"/>
    <property type="project" value="TreeGrafter"/>
</dbReference>
<dbReference type="GO" id="GO:0047952">
    <property type="term" value="F:glycerol-3-phosphate dehydrogenase [NAD(P)+] activity"/>
    <property type="evidence" value="ECO:0007669"/>
    <property type="project" value="UniProtKB-UniRule"/>
</dbReference>
<dbReference type="GO" id="GO:0051287">
    <property type="term" value="F:NAD binding"/>
    <property type="evidence" value="ECO:0007669"/>
    <property type="project" value="InterPro"/>
</dbReference>
<dbReference type="GO" id="GO:0005975">
    <property type="term" value="P:carbohydrate metabolic process"/>
    <property type="evidence" value="ECO:0007669"/>
    <property type="project" value="InterPro"/>
</dbReference>
<dbReference type="GO" id="GO:0046167">
    <property type="term" value="P:glycerol-3-phosphate biosynthetic process"/>
    <property type="evidence" value="ECO:0007669"/>
    <property type="project" value="UniProtKB-UniRule"/>
</dbReference>
<dbReference type="GO" id="GO:0046168">
    <property type="term" value="P:glycerol-3-phosphate catabolic process"/>
    <property type="evidence" value="ECO:0007669"/>
    <property type="project" value="InterPro"/>
</dbReference>
<dbReference type="GO" id="GO:0006650">
    <property type="term" value="P:glycerophospholipid metabolic process"/>
    <property type="evidence" value="ECO:0007669"/>
    <property type="project" value="UniProtKB-UniRule"/>
</dbReference>
<dbReference type="GO" id="GO:0008654">
    <property type="term" value="P:phospholipid biosynthetic process"/>
    <property type="evidence" value="ECO:0007669"/>
    <property type="project" value="UniProtKB-KW"/>
</dbReference>
<dbReference type="FunFam" id="1.10.1040.10:FF:000001">
    <property type="entry name" value="Glycerol-3-phosphate dehydrogenase [NAD(P)+]"/>
    <property type="match status" value="1"/>
</dbReference>
<dbReference type="FunFam" id="3.40.50.720:FF:000019">
    <property type="entry name" value="Glycerol-3-phosphate dehydrogenase [NAD(P)+]"/>
    <property type="match status" value="1"/>
</dbReference>
<dbReference type="Gene3D" id="1.10.1040.10">
    <property type="entry name" value="N-(1-d-carboxylethyl)-l-norvaline Dehydrogenase, domain 2"/>
    <property type="match status" value="1"/>
</dbReference>
<dbReference type="Gene3D" id="3.40.50.720">
    <property type="entry name" value="NAD(P)-binding Rossmann-like Domain"/>
    <property type="match status" value="1"/>
</dbReference>
<dbReference type="HAMAP" id="MF_00394">
    <property type="entry name" value="NAD_Glyc3P_dehydrog"/>
    <property type="match status" value="1"/>
</dbReference>
<dbReference type="InterPro" id="IPR008927">
    <property type="entry name" value="6-PGluconate_DH-like_C_sf"/>
</dbReference>
<dbReference type="InterPro" id="IPR013328">
    <property type="entry name" value="6PGD_dom2"/>
</dbReference>
<dbReference type="InterPro" id="IPR006168">
    <property type="entry name" value="G3P_DH_NAD-dep"/>
</dbReference>
<dbReference type="InterPro" id="IPR006109">
    <property type="entry name" value="G3P_DH_NAD-dep_C"/>
</dbReference>
<dbReference type="InterPro" id="IPR011128">
    <property type="entry name" value="G3P_DH_NAD-dep_N"/>
</dbReference>
<dbReference type="InterPro" id="IPR036291">
    <property type="entry name" value="NAD(P)-bd_dom_sf"/>
</dbReference>
<dbReference type="NCBIfam" id="NF000940">
    <property type="entry name" value="PRK00094.1-2"/>
    <property type="match status" value="1"/>
</dbReference>
<dbReference type="NCBIfam" id="NF000941">
    <property type="entry name" value="PRK00094.1-3"/>
    <property type="match status" value="1"/>
</dbReference>
<dbReference type="NCBIfam" id="NF000942">
    <property type="entry name" value="PRK00094.1-4"/>
    <property type="match status" value="1"/>
</dbReference>
<dbReference type="PANTHER" id="PTHR11728">
    <property type="entry name" value="GLYCEROL-3-PHOSPHATE DEHYDROGENASE"/>
    <property type="match status" value="1"/>
</dbReference>
<dbReference type="PANTHER" id="PTHR11728:SF1">
    <property type="entry name" value="GLYCEROL-3-PHOSPHATE DEHYDROGENASE [NAD(+)] 2, CHLOROPLASTIC"/>
    <property type="match status" value="1"/>
</dbReference>
<dbReference type="Pfam" id="PF07479">
    <property type="entry name" value="NAD_Gly3P_dh_C"/>
    <property type="match status" value="1"/>
</dbReference>
<dbReference type="Pfam" id="PF01210">
    <property type="entry name" value="NAD_Gly3P_dh_N"/>
    <property type="match status" value="1"/>
</dbReference>
<dbReference type="PIRSF" id="PIRSF000114">
    <property type="entry name" value="Glycerol-3-P_dh"/>
    <property type="match status" value="1"/>
</dbReference>
<dbReference type="PRINTS" id="PR00077">
    <property type="entry name" value="GPDHDRGNASE"/>
</dbReference>
<dbReference type="SUPFAM" id="SSF48179">
    <property type="entry name" value="6-phosphogluconate dehydrogenase C-terminal domain-like"/>
    <property type="match status" value="1"/>
</dbReference>
<dbReference type="SUPFAM" id="SSF51735">
    <property type="entry name" value="NAD(P)-binding Rossmann-fold domains"/>
    <property type="match status" value="1"/>
</dbReference>
<dbReference type="PROSITE" id="PS00957">
    <property type="entry name" value="NAD_G3PDH"/>
    <property type="match status" value="1"/>
</dbReference>